<organism>
    <name type="scientific">Schizosaccharomyces pombe (strain 972 / ATCC 24843)</name>
    <name type="common">Fission yeast</name>
    <dbReference type="NCBI Taxonomy" id="284812"/>
    <lineage>
        <taxon>Eukaryota</taxon>
        <taxon>Fungi</taxon>
        <taxon>Dikarya</taxon>
        <taxon>Ascomycota</taxon>
        <taxon>Taphrinomycotina</taxon>
        <taxon>Schizosaccharomycetes</taxon>
        <taxon>Schizosaccharomycetales</taxon>
        <taxon>Schizosaccharomycetaceae</taxon>
        <taxon>Schizosaccharomyces</taxon>
    </lineage>
</organism>
<name>UGPA1_SCHPO</name>
<proteinExistence type="evidence at protein level"/>
<evidence type="ECO:0000250" key="1"/>
<evidence type="ECO:0000250" key="2">
    <source>
        <dbReference type="UniProtKB" id="Q16851"/>
    </source>
</evidence>
<evidence type="ECO:0000250" key="3">
    <source>
        <dbReference type="UniProtKB" id="Q9M9P3"/>
    </source>
</evidence>
<evidence type="ECO:0000269" key="4">
    <source>
    </source>
</evidence>
<evidence type="ECO:0000269" key="5">
    <source>
    </source>
</evidence>
<evidence type="ECO:0000269" key="6">
    <source>
    </source>
</evidence>
<evidence type="ECO:0000305" key="7"/>
<comment type="function">
    <text evidence="6">Plays a central role as a glucosyl donor in cellular metabolic pathways.</text>
</comment>
<comment type="catalytic activity">
    <reaction evidence="6">
        <text>alpha-D-glucose 1-phosphate + UTP + H(+) = UDP-alpha-D-glucose + diphosphate</text>
        <dbReference type="Rhea" id="RHEA:19889"/>
        <dbReference type="ChEBI" id="CHEBI:15378"/>
        <dbReference type="ChEBI" id="CHEBI:33019"/>
        <dbReference type="ChEBI" id="CHEBI:46398"/>
        <dbReference type="ChEBI" id="CHEBI:58601"/>
        <dbReference type="ChEBI" id="CHEBI:58885"/>
        <dbReference type="EC" id="2.7.7.9"/>
    </reaction>
</comment>
<comment type="subunit">
    <text evidence="1">Homooctamer.</text>
</comment>
<comment type="subcellular location">
    <subcellularLocation>
        <location evidence="4">Cytoplasm</location>
    </subcellularLocation>
    <subcellularLocation>
        <location evidence="4">Nucleus</location>
    </subcellularLocation>
</comment>
<comment type="similarity">
    <text evidence="7">Belongs to the UDPGP type 1 family.</text>
</comment>
<sequence>MDLAPRPLGRQHSKSQSAFAFDNTATSIAASTMKNELNHLASTVKDPLAKKAFQKEMDNFFSLFSRYLQEDARGSEINWDLVESPKPEQVVEYDTITEAGGLSRDYLNKLAVLKLNGGLGTTMGCVGPKSIIEVRDGNSFLDLSVRQIEHLNRKYNVNVPFVLMNSFNTDEATAKVIKKYEAHKIDILTFNQSRYPRVHKETLLPVPHTADSAIDEWYPPGHGDVFEALTNSGIIDTLIAQGKEYLFVSNIDNLGAVVDLNILNHMVETNAEYLMELTNKTKADVKGGTLIDYDGNVRLLEIAQVPPQHVEEFKSIKKFKYFNTNNLWFHLPSVKRVVNNHELSMEIIPNKKTIKHKGENINIIQLETAAGAAIRHFKNAHGVNVPRRRFLPVKTCSDLLLVKSDLYSINHGQVEMNPRRFGGTAPLVKLGAHFKKVADFSAHIPSIPKILELDHLTITGDVNIGRNVTLKGTVIIVASDANRIDIPNGSVLENCVITGNLNILEH</sequence>
<feature type="chain" id="PRO_0000185763" description="Probable UTP--glucose-1-phosphate uridylyltransferase">
    <location>
        <begin position="1"/>
        <end position="506"/>
    </location>
</feature>
<feature type="region of interest" description="Oligomerization" evidence="1">
    <location>
        <begin position="455"/>
        <end position="506"/>
    </location>
</feature>
<feature type="active site" evidence="1">
    <location>
        <position position="394"/>
    </location>
</feature>
<feature type="binding site" evidence="3">
    <location>
        <begin position="115"/>
        <end position="118"/>
    </location>
    <ligand>
        <name>UTP</name>
        <dbReference type="ChEBI" id="CHEBI:46398"/>
    </ligand>
</feature>
<feature type="binding site" evidence="2">
    <location>
        <begin position="117"/>
        <end position="118"/>
    </location>
    <ligand>
        <name>substrate</name>
    </ligand>
</feature>
<feature type="binding site" evidence="1">
    <location>
        <position position="129"/>
    </location>
    <ligand>
        <name>Mg(2+)</name>
        <dbReference type="ChEBI" id="CHEBI:18420"/>
    </ligand>
</feature>
<feature type="binding site" evidence="3">
    <location>
        <position position="129"/>
    </location>
    <ligand>
        <name>UTP</name>
        <dbReference type="ChEBI" id="CHEBI:46398"/>
    </ligand>
</feature>
<feature type="binding site" evidence="3">
    <location>
        <position position="192"/>
    </location>
    <ligand>
        <name>UTP</name>
        <dbReference type="ChEBI" id="CHEBI:46398"/>
    </ligand>
</feature>
<feature type="binding site" evidence="3">
    <location>
        <position position="221"/>
    </location>
    <ligand>
        <name>UTP</name>
        <dbReference type="ChEBI" id="CHEBI:46398"/>
    </ligand>
</feature>
<feature type="binding site" evidence="2">
    <location>
        <position position="222"/>
    </location>
    <ligand>
        <name>substrate</name>
    </ligand>
</feature>
<feature type="binding site" evidence="2">
    <location>
        <begin position="250"/>
        <end position="252"/>
    </location>
    <ligand>
        <name>substrate</name>
    </ligand>
</feature>
<feature type="binding site" evidence="1">
    <location>
        <position position="252"/>
    </location>
    <ligand>
        <name>Mg(2+)</name>
        <dbReference type="ChEBI" id="CHEBI:18420"/>
    </ligand>
</feature>
<feature type="binding site" evidence="3">
    <location>
        <position position="252"/>
    </location>
    <ligand>
        <name>UTP</name>
        <dbReference type="ChEBI" id="CHEBI:46398"/>
    </ligand>
</feature>
<feature type="binding site" evidence="3">
    <location>
        <position position="394"/>
    </location>
    <ligand>
        <name>UTP</name>
        <dbReference type="ChEBI" id="CHEBI:46398"/>
    </ligand>
</feature>
<feature type="modified residue" description="Phosphoserine" evidence="5">
    <location>
        <position position="15"/>
    </location>
</feature>
<feature type="modified residue" description="Phosphoserine" evidence="5">
    <location>
        <position position="17"/>
    </location>
</feature>
<keyword id="KW-0963">Cytoplasm</keyword>
<keyword id="KW-0460">Magnesium</keyword>
<keyword id="KW-0479">Metal-binding</keyword>
<keyword id="KW-0548">Nucleotidyltransferase</keyword>
<keyword id="KW-0539">Nucleus</keyword>
<keyword id="KW-0597">Phosphoprotein</keyword>
<keyword id="KW-1185">Reference proteome</keyword>
<keyword id="KW-0808">Transferase</keyword>
<reference key="1">
    <citation type="journal article" date="2002" name="Nature">
        <title>The genome sequence of Schizosaccharomyces pombe.</title>
        <authorList>
            <person name="Wood V."/>
            <person name="Gwilliam R."/>
            <person name="Rajandream M.A."/>
            <person name="Lyne M.H."/>
            <person name="Lyne R."/>
            <person name="Stewart A."/>
            <person name="Sgouros J.G."/>
            <person name="Peat N."/>
            <person name="Hayles J."/>
            <person name="Baker S.G."/>
            <person name="Basham D."/>
            <person name="Bowman S."/>
            <person name="Brooks K."/>
            <person name="Brown D."/>
            <person name="Brown S."/>
            <person name="Chillingworth T."/>
            <person name="Churcher C.M."/>
            <person name="Collins M."/>
            <person name="Connor R."/>
            <person name="Cronin A."/>
            <person name="Davis P."/>
            <person name="Feltwell T."/>
            <person name="Fraser A."/>
            <person name="Gentles S."/>
            <person name="Goble A."/>
            <person name="Hamlin N."/>
            <person name="Harris D.E."/>
            <person name="Hidalgo J."/>
            <person name="Hodgson G."/>
            <person name="Holroyd S."/>
            <person name="Hornsby T."/>
            <person name="Howarth S."/>
            <person name="Huckle E.J."/>
            <person name="Hunt S."/>
            <person name="Jagels K."/>
            <person name="James K.D."/>
            <person name="Jones L."/>
            <person name="Jones M."/>
            <person name="Leather S."/>
            <person name="McDonald S."/>
            <person name="McLean J."/>
            <person name="Mooney P."/>
            <person name="Moule S."/>
            <person name="Mungall K.L."/>
            <person name="Murphy L.D."/>
            <person name="Niblett D."/>
            <person name="Odell C."/>
            <person name="Oliver K."/>
            <person name="O'Neil S."/>
            <person name="Pearson D."/>
            <person name="Quail M.A."/>
            <person name="Rabbinowitsch E."/>
            <person name="Rutherford K.M."/>
            <person name="Rutter S."/>
            <person name="Saunders D."/>
            <person name="Seeger K."/>
            <person name="Sharp S."/>
            <person name="Skelton J."/>
            <person name="Simmonds M.N."/>
            <person name="Squares R."/>
            <person name="Squares S."/>
            <person name="Stevens K."/>
            <person name="Taylor K."/>
            <person name="Taylor R.G."/>
            <person name="Tivey A."/>
            <person name="Walsh S.V."/>
            <person name="Warren T."/>
            <person name="Whitehead S."/>
            <person name="Woodward J.R."/>
            <person name="Volckaert G."/>
            <person name="Aert R."/>
            <person name="Robben J."/>
            <person name="Grymonprez B."/>
            <person name="Weltjens I."/>
            <person name="Vanstreels E."/>
            <person name="Rieger M."/>
            <person name="Schaefer M."/>
            <person name="Mueller-Auer S."/>
            <person name="Gabel C."/>
            <person name="Fuchs M."/>
            <person name="Duesterhoeft A."/>
            <person name="Fritzc C."/>
            <person name="Holzer E."/>
            <person name="Moestl D."/>
            <person name="Hilbert H."/>
            <person name="Borzym K."/>
            <person name="Langer I."/>
            <person name="Beck A."/>
            <person name="Lehrach H."/>
            <person name="Reinhardt R."/>
            <person name="Pohl T.M."/>
            <person name="Eger P."/>
            <person name="Zimmermann W."/>
            <person name="Wedler H."/>
            <person name="Wambutt R."/>
            <person name="Purnelle B."/>
            <person name="Goffeau A."/>
            <person name="Cadieu E."/>
            <person name="Dreano S."/>
            <person name="Gloux S."/>
            <person name="Lelaure V."/>
            <person name="Mottier S."/>
            <person name="Galibert F."/>
            <person name="Aves S.J."/>
            <person name="Xiang Z."/>
            <person name="Hunt C."/>
            <person name="Moore K."/>
            <person name="Hurst S.M."/>
            <person name="Lucas M."/>
            <person name="Rochet M."/>
            <person name="Gaillardin C."/>
            <person name="Tallada V.A."/>
            <person name="Garzon A."/>
            <person name="Thode G."/>
            <person name="Daga R.R."/>
            <person name="Cruzado L."/>
            <person name="Jimenez J."/>
            <person name="Sanchez M."/>
            <person name="del Rey F."/>
            <person name="Benito J."/>
            <person name="Dominguez A."/>
            <person name="Revuelta J.L."/>
            <person name="Moreno S."/>
            <person name="Armstrong J."/>
            <person name="Forsburg S.L."/>
            <person name="Cerutti L."/>
            <person name="Lowe T."/>
            <person name="McCombie W.R."/>
            <person name="Paulsen I."/>
            <person name="Potashkin J."/>
            <person name="Shpakovski G.V."/>
            <person name="Ussery D."/>
            <person name="Barrell B.G."/>
            <person name="Nurse P."/>
        </authorList>
    </citation>
    <scope>NUCLEOTIDE SEQUENCE [LARGE SCALE GENOMIC DNA]</scope>
    <source>
        <strain>972 / ATCC 24843</strain>
    </source>
</reference>
<reference key="2">
    <citation type="journal article" date="1997" name="DNA Res.">
        <title>Identification of open reading frames in Schizosaccharomyces pombe cDNAs.</title>
        <authorList>
            <person name="Yoshioka S."/>
            <person name="Kato K."/>
            <person name="Nakai K."/>
            <person name="Okayama H."/>
            <person name="Nojima H."/>
        </authorList>
    </citation>
    <scope>NUCLEOTIDE SEQUENCE [LARGE SCALE MRNA] OF 203-506</scope>
    <source>
        <strain>PR745</strain>
    </source>
</reference>
<reference key="3">
    <citation type="journal article" date="2006" name="Nat. Biotechnol.">
        <title>ORFeome cloning and global analysis of protein localization in the fission yeast Schizosaccharomyces pombe.</title>
        <authorList>
            <person name="Matsuyama A."/>
            <person name="Arai R."/>
            <person name="Yashiroda Y."/>
            <person name="Shirai A."/>
            <person name="Kamata A."/>
            <person name="Sekido S."/>
            <person name="Kobayashi Y."/>
            <person name="Hashimoto A."/>
            <person name="Hamamoto M."/>
            <person name="Hiraoka Y."/>
            <person name="Horinouchi S."/>
            <person name="Yoshida M."/>
        </authorList>
    </citation>
    <scope>SUBCELLULAR LOCATION [LARGE SCALE ANALYSIS]</scope>
</reference>
<reference key="4">
    <citation type="journal article" date="2008" name="J. Proteome Res.">
        <title>Phosphoproteome analysis of fission yeast.</title>
        <authorList>
            <person name="Wilson-Grady J.T."/>
            <person name="Villen J."/>
            <person name="Gygi S.P."/>
        </authorList>
    </citation>
    <scope>PHOSPHORYLATION [LARGE SCALE ANALYSIS] AT SER-15 AND SER-17</scope>
    <scope>IDENTIFICATION BY MASS SPECTROMETRY</scope>
</reference>
<reference key="5">
    <citation type="journal article" date="2011" name="Drug Metab. Dispos.">
        <title>Production of ibuprofen acyl glucosides by human UGT2B7.</title>
        <authorList>
            <person name="Buchheit D."/>
            <person name="Dragan C.A."/>
            <person name="Schmitt E.I."/>
            <person name="Bureik M."/>
        </authorList>
    </citation>
    <scope>CATALYTIC ACTIVITY</scope>
    <scope>FUNCTION</scope>
</reference>
<dbReference type="EC" id="2.7.7.9"/>
<dbReference type="EMBL" id="CU329672">
    <property type="protein sequence ID" value="CAA22857.1"/>
    <property type="molecule type" value="Genomic_DNA"/>
</dbReference>
<dbReference type="EMBL" id="D89160">
    <property type="protein sequence ID" value="BAA13822.1"/>
    <property type="molecule type" value="mRNA"/>
</dbReference>
<dbReference type="PIR" id="T40935">
    <property type="entry name" value="T40935"/>
</dbReference>
<dbReference type="PIR" id="T42521">
    <property type="entry name" value="T42521"/>
</dbReference>
<dbReference type="RefSeq" id="NP_588132.1">
    <property type="nucleotide sequence ID" value="NM_001023122.2"/>
</dbReference>
<dbReference type="SMR" id="P78811"/>
<dbReference type="BioGRID" id="275456">
    <property type="interactions" value="7"/>
</dbReference>
<dbReference type="FunCoup" id="P78811">
    <property type="interactions" value="578"/>
</dbReference>
<dbReference type="STRING" id="284812.P78811"/>
<dbReference type="iPTMnet" id="P78811"/>
<dbReference type="PaxDb" id="4896-SPCC1322.04.1"/>
<dbReference type="EnsemblFungi" id="SPCC1322.04.1">
    <property type="protein sequence ID" value="SPCC1322.04.1:pep"/>
    <property type="gene ID" value="SPCC1322.04"/>
</dbReference>
<dbReference type="GeneID" id="2538877"/>
<dbReference type="KEGG" id="spo:2538877"/>
<dbReference type="PomBase" id="SPCC1322.04">
    <property type="gene designation" value="fyu1"/>
</dbReference>
<dbReference type="VEuPathDB" id="FungiDB:SPCC1322.04"/>
<dbReference type="eggNOG" id="KOG2638">
    <property type="taxonomic scope" value="Eukaryota"/>
</dbReference>
<dbReference type="HOGENOM" id="CLU_023632_3_0_1"/>
<dbReference type="InParanoid" id="P78811"/>
<dbReference type="OMA" id="KEYCFLS"/>
<dbReference type="PhylomeDB" id="P78811"/>
<dbReference type="Reactome" id="R-SPO-173599">
    <property type="pathway name" value="Formation of the active cofactor, UDP-glucuronate"/>
</dbReference>
<dbReference type="Reactome" id="R-SPO-3322077">
    <property type="pathway name" value="Glycogen synthesis"/>
</dbReference>
<dbReference type="PRO" id="PR:P78811"/>
<dbReference type="Proteomes" id="UP000002485">
    <property type="component" value="Chromosome III"/>
</dbReference>
<dbReference type="GO" id="GO:0005737">
    <property type="term" value="C:cytoplasm"/>
    <property type="evidence" value="ECO:0000318"/>
    <property type="project" value="GO_Central"/>
</dbReference>
<dbReference type="GO" id="GO:0005829">
    <property type="term" value="C:cytosol"/>
    <property type="evidence" value="ECO:0007005"/>
    <property type="project" value="PomBase"/>
</dbReference>
<dbReference type="GO" id="GO:0005634">
    <property type="term" value="C:nucleus"/>
    <property type="evidence" value="ECO:0007005"/>
    <property type="project" value="PomBase"/>
</dbReference>
<dbReference type="GO" id="GO:0046872">
    <property type="term" value="F:metal ion binding"/>
    <property type="evidence" value="ECO:0007669"/>
    <property type="project" value="UniProtKB-KW"/>
</dbReference>
<dbReference type="GO" id="GO:0003983">
    <property type="term" value="F:UTP:glucose-1-phosphate uridylyltransferase activity"/>
    <property type="evidence" value="ECO:0000315"/>
    <property type="project" value="PomBase"/>
</dbReference>
<dbReference type="GO" id="GO:0005977">
    <property type="term" value="P:glycogen metabolic process"/>
    <property type="evidence" value="ECO:0000318"/>
    <property type="project" value="GO_Central"/>
</dbReference>
<dbReference type="GO" id="GO:0006011">
    <property type="term" value="P:UDP-alpha-D-glucose metabolic process"/>
    <property type="evidence" value="ECO:0000315"/>
    <property type="project" value="PomBase"/>
</dbReference>
<dbReference type="CDD" id="cd00897">
    <property type="entry name" value="UGPase_euk"/>
    <property type="match status" value="1"/>
</dbReference>
<dbReference type="FunFam" id="2.160.10.10:FF:000001">
    <property type="entry name" value="UTP--glucose-1-phosphate uridylyltransferase"/>
    <property type="match status" value="1"/>
</dbReference>
<dbReference type="FunFam" id="3.90.550.10:FF:000002">
    <property type="entry name" value="UTP--glucose-1-phosphate uridylyltransferase"/>
    <property type="match status" value="1"/>
</dbReference>
<dbReference type="Gene3D" id="2.160.10.10">
    <property type="entry name" value="Hexapeptide repeat proteins"/>
    <property type="match status" value="1"/>
</dbReference>
<dbReference type="Gene3D" id="3.90.550.10">
    <property type="entry name" value="Spore Coat Polysaccharide Biosynthesis Protein SpsA, Chain A"/>
    <property type="match status" value="1"/>
</dbReference>
<dbReference type="InterPro" id="IPR029044">
    <property type="entry name" value="Nucleotide-diphossugar_trans"/>
</dbReference>
<dbReference type="InterPro" id="IPR002618">
    <property type="entry name" value="UDPGP_fam"/>
</dbReference>
<dbReference type="InterPro" id="IPR016267">
    <property type="entry name" value="UDPGP_trans"/>
</dbReference>
<dbReference type="PANTHER" id="PTHR43511">
    <property type="match status" value="1"/>
</dbReference>
<dbReference type="Pfam" id="PF01704">
    <property type="entry name" value="UDPGP"/>
    <property type="match status" value="1"/>
</dbReference>
<dbReference type="PIRSF" id="PIRSF000806">
    <property type="entry name" value="UDPGP"/>
    <property type="match status" value="1"/>
</dbReference>
<dbReference type="SUPFAM" id="SSF53448">
    <property type="entry name" value="Nucleotide-diphospho-sugar transferases"/>
    <property type="match status" value="1"/>
</dbReference>
<gene>
    <name type="primary">fyu1</name>
    <name type="ORF">SPCC1322.04</name>
</gene>
<accession>P78811</accession>
<protein>
    <recommendedName>
        <fullName>Probable UTP--glucose-1-phosphate uridylyltransferase</fullName>
        <ecNumber>2.7.7.9</ecNumber>
    </recommendedName>
    <alternativeName>
        <fullName>UDP-glucose pyrophosphorylase</fullName>
        <shortName>UDPGP</shortName>
        <shortName>UGPase</shortName>
    </alternativeName>
</protein>